<accession>P07373</accession>
<accession>Q45673</accession>
<name>SP5E_BACSU</name>
<reference key="1">
    <citation type="journal article" date="1990" name="Nucleic Acids Res.">
        <title>Revised nucleotide sequence of the sporulation gene spoVE from Bacillus subtilis.</title>
        <authorList>
            <person name="Sato T."/>
            <person name="Theeragool G."/>
            <person name="Yamamoto T."/>
            <person name="Okamoto M."/>
            <person name="Kobayashi Y."/>
        </authorList>
    </citation>
    <scope>NUCLEOTIDE SEQUENCE [GENOMIC DNA]</scope>
    <source>
        <strain>168</strain>
    </source>
</reference>
<reference key="2">
    <citation type="journal article" date="1986" name="J. Gen. Microbiol.">
        <title>Nucleotide sequence of the Bacillus subtilis developmental gene spoVE.</title>
        <authorList>
            <person name="Bugaichuk U.D."/>
            <person name="Piggot P.J."/>
        </authorList>
    </citation>
    <scope>NUCLEOTIDE SEQUENCE [GENOMIC DNA]</scope>
</reference>
<reference key="3">
    <citation type="journal article" date="1997" name="Nature">
        <title>The complete genome sequence of the Gram-positive bacterium Bacillus subtilis.</title>
        <authorList>
            <person name="Kunst F."/>
            <person name="Ogasawara N."/>
            <person name="Moszer I."/>
            <person name="Albertini A.M."/>
            <person name="Alloni G."/>
            <person name="Azevedo V."/>
            <person name="Bertero M.G."/>
            <person name="Bessieres P."/>
            <person name="Bolotin A."/>
            <person name="Borchert S."/>
            <person name="Borriss R."/>
            <person name="Boursier L."/>
            <person name="Brans A."/>
            <person name="Braun M."/>
            <person name="Brignell S.C."/>
            <person name="Bron S."/>
            <person name="Brouillet S."/>
            <person name="Bruschi C.V."/>
            <person name="Caldwell B."/>
            <person name="Capuano V."/>
            <person name="Carter N.M."/>
            <person name="Choi S.-K."/>
            <person name="Codani J.-J."/>
            <person name="Connerton I.F."/>
            <person name="Cummings N.J."/>
            <person name="Daniel R.A."/>
            <person name="Denizot F."/>
            <person name="Devine K.M."/>
            <person name="Duesterhoeft A."/>
            <person name="Ehrlich S.D."/>
            <person name="Emmerson P.T."/>
            <person name="Entian K.-D."/>
            <person name="Errington J."/>
            <person name="Fabret C."/>
            <person name="Ferrari E."/>
            <person name="Foulger D."/>
            <person name="Fritz C."/>
            <person name="Fujita M."/>
            <person name="Fujita Y."/>
            <person name="Fuma S."/>
            <person name="Galizzi A."/>
            <person name="Galleron N."/>
            <person name="Ghim S.-Y."/>
            <person name="Glaser P."/>
            <person name="Goffeau A."/>
            <person name="Golightly E.J."/>
            <person name="Grandi G."/>
            <person name="Guiseppi G."/>
            <person name="Guy B.J."/>
            <person name="Haga K."/>
            <person name="Haiech J."/>
            <person name="Harwood C.R."/>
            <person name="Henaut A."/>
            <person name="Hilbert H."/>
            <person name="Holsappel S."/>
            <person name="Hosono S."/>
            <person name="Hullo M.-F."/>
            <person name="Itaya M."/>
            <person name="Jones L.-M."/>
            <person name="Joris B."/>
            <person name="Karamata D."/>
            <person name="Kasahara Y."/>
            <person name="Klaerr-Blanchard M."/>
            <person name="Klein C."/>
            <person name="Kobayashi Y."/>
            <person name="Koetter P."/>
            <person name="Koningstein G."/>
            <person name="Krogh S."/>
            <person name="Kumano M."/>
            <person name="Kurita K."/>
            <person name="Lapidus A."/>
            <person name="Lardinois S."/>
            <person name="Lauber J."/>
            <person name="Lazarevic V."/>
            <person name="Lee S.-M."/>
            <person name="Levine A."/>
            <person name="Liu H."/>
            <person name="Masuda S."/>
            <person name="Mauel C."/>
            <person name="Medigue C."/>
            <person name="Medina N."/>
            <person name="Mellado R.P."/>
            <person name="Mizuno M."/>
            <person name="Moestl D."/>
            <person name="Nakai S."/>
            <person name="Noback M."/>
            <person name="Noone D."/>
            <person name="O'Reilly M."/>
            <person name="Ogawa K."/>
            <person name="Ogiwara A."/>
            <person name="Oudega B."/>
            <person name="Park S.-H."/>
            <person name="Parro V."/>
            <person name="Pohl T.M."/>
            <person name="Portetelle D."/>
            <person name="Porwollik S."/>
            <person name="Prescott A.M."/>
            <person name="Presecan E."/>
            <person name="Pujic P."/>
            <person name="Purnelle B."/>
            <person name="Rapoport G."/>
            <person name="Rey M."/>
            <person name="Reynolds S."/>
            <person name="Rieger M."/>
            <person name="Rivolta C."/>
            <person name="Rocha E."/>
            <person name="Roche B."/>
            <person name="Rose M."/>
            <person name="Sadaie Y."/>
            <person name="Sato T."/>
            <person name="Scanlan E."/>
            <person name="Schleich S."/>
            <person name="Schroeter R."/>
            <person name="Scoffone F."/>
            <person name="Sekiguchi J."/>
            <person name="Sekowska A."/>
            <person name="Seror S.J."/>
            <person name="Serror P."/>
            <person name="Shin B.-S."/>
            <person name="Soldo B."/>
            <person name="Sorokin A."/>
            <person name="Tacconi E."/>
            <person name="Takagi T."/>
            <person name="Takahashi H."/>
            <person name="Takemaru K."/>
            <person name="Takeuchi M."/>
            <person name="Tamakoshi A."/>
            <person name="Tanaka T."/>
            <person name="Terpstra P."/>
            <person name="Tognoni A."/>
            <person name="Tosato V."/>
            <person name="Uchiyama S."/>
            <person name="Vandenbol M."/>
            <person name="Vannier F."/>
            <person name="Vassarotti A."/>
            <person name="Viari A."/>
            <person name="Wambutt R."/>
            <person name="Wedler E."/>
            <person name="Wedler H."/>
            <person name="Weitzenegger T."/>
            <person name="Winters P."/>
            <person name="Wipat A."/>
            <person name="Yamamoto H."/>
            <person name="Yamane K."/>
            <person name="Yasumoto K."/>
            <person name="Yata K."/>
            <person name="Yoshida K."/>
            <person name="Yoshikawa H.-F."/>
            <person name="Zumstein E."/>
            <person name="Yoshikawa H."/>
            <person name="Danchin A."/>
        </authorList>
    </citation>
    <scope>NUCLEOTIDE SEQUENCE [LARGE SCALE GENOMIC DNA]</scope>
    <source>
        <strain>168</strain>
    </source>
</reference>
<reference key="4">
    <citation type="submission" date="1993-01" db="EMBL/GenBank/DDBJ databases">
        <authorList>
            <person name="Theeragool G."/>
            <person name="Miyao A."/>
            <person name="Yamada K."/>
            <person name="Sato T."/>
            <person name="Kobayashi Y."/>
        </authorList>
    </citation>
    <scope>NUCLEOTIDE SEQUENCE [GENOMIC DNA] OF 1-46</scope>
</reference>
<reference key="5">
    <citation type="journal article" date="1993" name="J. Gen. Microbiol.">
        <title>DNA sequence of the murE-murD region of Bacillus subtilis 168.</title>
        <authorList>
            <person name="Daniel R.A."/>
            <person name="Errington J."/>
        </authorList>
    </citation>
    <scope>NUCLEOTIDE SEQUENCE [GENOMIC DNA] OF 1-40</scope>
    <source>
        <strain>168</strain>
    </source>
</reference>
<reference key="6">
    <citation type="journal article" date="1992" name="Biochimie">
        <title>A Bacillus subtilis morphogene cluster that includes spoVE is homologous to the mra region of Escherichia coli.</title>
        <authorList>
            <person name="Henriques A.O."/>
            <person name="de Lencastre H."/>
            <person name="Piggot P.J."/>
        </authorList>
    </citation>
    <scope>NUCLEOTIDE SEQUENCE [GENOMIC DNA] OF 343-366</scope>
    <source>
        <strain>168</strain>
    </source>
</reference>
<reference key="7">
    <citation type="journal article" date="2023" name="Nat. Commun.">
        <title>Structural basis of peptidoglycan synthesis by E. coli RodA-PBP2 complex.</title>
        <authorList>
            <person name="Nygaard R."/>
            <person name="Graham C.L.B."/>
            <person name="Belcher Dufrisne M."/>
            <person name="Colburn J.D."/>
            <person name="Pepe J."/>
            <person name="Hydorn M.A."/>
            <person name="Corradi S."/>
            <person name="Brown C.M."/>
            <person name="Ashraf K.U."/>
            <person name="Vickery O.N."/>
            <person name="Briggs N.S."/>
            <person name="Deering J.J."/>
            <person name="Kloss B."/>
            <person name="Botta B."/>
            <person name="Clarke O.B."/>
            <person name="Columbus L."/>
            <person name="Dworkin J."/>
            <person name="Stansfeld P.J."/>
            <person name="Roper D.I."/>
            <person name="Mancia F."/>
        </authorList>
    </citation>
    <scope>MUTAGENESIS OF ARG-48; SER-103; TRP-104; GLU-116; LYS-119; ASP-163; ARG-212; PRO-258; GLU-259; THR-262 AND ASP-263</scope>
</reference>
<comment type="function">
    <text>May play an essential role not only during sporulation, but also during vegetative growth.</text>
</comment>
<comment type="subcellular location">
    <subcellularLocation>
        <location>Cell membrane</location>
        <topology>Multi-pass membrane protein</topology>
    </subcellularLocation>
</comment>
<comment type="similarity">
    <text evidence="3">Belongs to the SEDS family. SpoVE subfamily.</text>
</comment>
<comment type="sequence caution" evidence="3">
    <conflict type="frameshift">
        <sequence resource="EMBL-CDS" id="AAA22807"/>
    </conflict>
</comment>
<comment type="sequence caution" evidence="3">
    <conflict type="erroneous initiation">
        <sequence resource="EMBL-CDS" id="CAA35784"/>
    </conflict>
</comment>
<evidence type="ECO:0000255" key="1"/>
<evidence type="ECO:0000269" key="2">
    <source>
    </source>
</evidence>
<evidence type="ECO:0000305" key="3"/>
<gene>
    <name type="primary">spoVE</name>
    <name type="ordered locus">BSU15210</name>
</gene>
<keyword id="KW-1003">Cell membrane</keyword>
<keyword id="KW-0133">Cell shape</keyword>
<keyword id="KW-0472">Membrane</keyword>
<keyword id="KW-1185">Reference proteome</keyword>
<keyword id="KW-0749">Sporulation</keyword>
<keyword id="KW-0812">Transmembrane</keyword>
<keyword id="KW-1133">Transmembrane helix</keyword>
<dbReference type="EMBL" id="X51419">
    <property type="protein sequence ID" value="CAA35783.1"/>
    <property type="molecule type" value="Genomic_DNA"/>
</dbReference>
<dbReference type="EMBL" id="X51419">
    <property type="protein sequence ID" value="CAA35784.1"/>
    <property type="status" value="ALT_INIT"/>
    <property type="molecule type" value="Genomic_DNA"/>
</dbReference>
<dbReference type="EMBL" id="M15742">
    <property type="protein sequence ID" value="AAA22807.1"/>
    <property type="status" value="ALT_FRAME"/>
    <property type="molecule type" value="Genomic_DNA"/>
</dbReference>
<dbReference type="EMBL" id="AL009126">
    <property type="protein sequence ID" value="CAB13394.1"/>
    <property type="molecule type" value="Genomic_DNA"/>
</dbReference>
<dbReference type="EMBL" id="D14109">
    <property type="protein sequence ID" value="BAA03174.1"/>
    <property type="molecule type" value="Genomic_DNA"/>
</dbReference>
<dbReference type="EMBL" id="Z15056">
    <property type="status" value="NOT_ANNOTATED_CDS"/>
    <property type="molecule type" value="Genomic_DNA"/>
</dbReference>
<dbReference type="EMBL" id="X64259">
    <property type="protein sequence ID" value="CAA45557.1"/>
    <property type="molecule type" value="Genomic_DNA"/>
</dbReference>
<dbReference type="PIR" id="S10243">
    <property type="entry name" value="SZBS5E"/>
</dbReference>
<dbReference type="RefSeq" id="NP_389404.1">
    <property type="nucleotide sequence ID" value="NC_000964.3"/>
</dbReference>
<dbReference type="RefSeq" id="WP_003244810.1">
    <property type="nucleotide sequence ID" value="NZ_OZ025638.1"/>
</dbReference>
<dbReference type="SMR" id="P07373"/>
<dbReference type="FunCoup" id="P07373">
    <property type="interactions" value="398"/>
</dbReference>
<dbReference type="STRING" id="224308.BSU15210"/>
<dbReference type="TCDB" id="2.A.103.1.3">
    <property type="family name" value="the bacterial murein precursor exporter (mpe) family"/>
</dbReference>
<dbReference type="PaxDb" id="224308-BSU15210"/>
<dbReference type="EnsemblBacteria" id="CAB13394">
    <property type="protein sequence ID" value="CAB13394"/>
    <property type="gene ID" value="BSU_15210"/>
</dbReference>
<dbReference type="GeneID" id="936953"/>
<dbReference type="KEGG" id="bsu:BSU15210"/>
<dbReference type="PATRIC" id="fig|224308.179.peg.1659"/>
<dbReference type="eggNOG" id="COG0772">
    <property type="taxonomic scope" value="Bacteria"/>
</dbReference>
<dbReference type="InParanoid" id="P07373"/>
<dbReference type="OrthoDB" id="9768187at2"/>
<dbReference type="PhylomeDB" id="P07373"/>
<dbReference type="BioCyc" id="BSUB:BSU15210-MONOMER"/>
<dbReference type="Proteomes" id="UP000001570">
    <property type="component" value="Chromosome"/>
</dbReference>
<dbReference type="GO" id="GO:0032153">
    <property type="term" value="C:cell division site"/>
    <property type="evidence" value="ECO:0000318"/>
    <property type="project" value="GO_Central"/>
</dbReference>
<dbReference type="GO" id="GO:0005886">
    <property type="term" value="C:plasma membrane"/>
    <property type="evidence" value="ECO:0000318"/>
    <property type="project" value="GO_Central"/>
</dbReference>
<dbReference type="GO" id="GO:0015648">
    <property type="term" value="F:lipid-linked peptidoglycan transporter activity"/>
    <property type="evidence" value="ECO:0000318"/>
    <property type="project" value="GO_Central"/>
</dbReference>
<dbReference type="GO" id="GO:0051301">
    <property type="term" value="P:cell division"/>
    <property type="evidence" value="ECO:0000318"/>
    <property type="project" value="GO_Central"/>
</dbReference>
<dbReference type="GO" id="GO:0009252">
    <property type="term" value="P:peptidoglycan biosynthetic process"/>
    <property type="evidence" value="ECO:0007669"/>
    <property type="project" value="InterPro"/>
</dbReference>
<dbReference type="GO" id="GO:0008360">
    <property type="term" value="P:regulation of cell shape"/>
    <property type="evidence" value="ECO:0000318"/>
    <property type="project" value="GO_Central"/>
</dbReference>
<dbReference type="GO" id="GO:0030435">
    <property type="term" value="P:sporulation resulting in formation of a cellular spore"/>
    <property type="evidence" value="ECO:0007669"/>
    <property type="project" value="UniProtKB-KW"/>
</dbReference>
<dbReference type="InterPro" id="IPR018365">
    <property type="entry name" value="Cell_cycle_FtsW-rel_CS"/>
</dbReference>
<dbReference type="InterPro" id="IPR013437">
    <property type="entry name" value="FtsW"/>
</dbReference>
<dbReference type="InterPro" id="IPR001182">
    <property type="entry name" value="FtsW/RodA"/>
</dbReference>
<dbReference type="InterPro" id="IPR013438">
    <property type="entry name" value="SpoVE"/>
</dbReference>
<dbReference type="NCBIfam" id="TIGR02614">
    <property type="entry name" value="ftsW"/>
    <property type="match status" value="1"/>
</dbReference>
<dbReference type="NCBIfam" id="TIGR02615">
    <property type="entry name" value="spoVE"/>
    <property type="match status" value="1"/>
</dbReference>
<dbReference type="PANTHER" id="PTHR30474">
    <property type="entry name" value="CELL CYCLE PROTEIN"/>
    <property type="match status" value="1"/>
</dbReference>
<dbReference type="PANTHER" id="PTHR30474:SF13">
    <property type="entry name" value="STAGE V SPORULATION PROTEIN E"/>
    <property type="match status" value="1"/>
</dbReference>
<dbReference type="Pfam" id="PF01098">
    <property type="entry name" value="FTSW_RODA_SPOVE"/>
    <property type="match status" value="1"/>
</dbReference>
<dbReference type="PROSITE" id="PS00428">
    <property type="entry name" value="FTSW_RODA_SPOVE"/>
    <property type="match status" value="1"/>
</dbReference>
<organism>
    <name type="scientific">Bacillus subtilis (strain 168)</name>
    <dbReference type="NCBI Taxonomy" id="224308"/>
    <lineage>
        <taxon>Bacteria</taxon>
        <taxon>Bacillati</taxon>
        <taxon>Bacillota</taxon>
        <taxon>Bacilli</taxon>
        <taxon>Bacillales</taxon>
        <taxon>Bacillaceae</taxon>
        <taxon>Bacillus</taxon>
    </lineage>
</organism>
<protein>
    <recommendedName>
        <fullName>Stage V sporulation protein E</fullName>
    </recommendedName>
</protein>
<feature type="chain" id="PRO_0000062722" description="Stage V sporulation protein E">
    <location>
        <begin position="1"/>
        <end position="366"/>
    </location>
</feature>
<feature type="transmembrane region" description="Helical" evidence="1">
    <location>
        <begin position="10"/>
        <end position="30"/>
    </location>
</feature>
<feature type="transmembrane region" description="Helical" evidence="1">
    <location>
        <begin position="50"/>
        <end position="70"/>
    </location>
</feature>
<feature type="transmembrane region" description="Helical" evidence="1">
    <location>
        <begin position="77"/>
        <end position="97"/>
    </location>
</feature>
<feature type="transmembrane region" description="Helical" evidence="1">
    <location>
        <begin position="105"/>
        <end position="125"/>
    </location>
</feature>
<feature type="transmembrane region" description="Helical" evidence="1">
    <location>
        <begin position="144"/>
        <end position="164"/>
    </location>
</feature>
<feature type="transmembrane region" description="Helical" evidence="1">
    <location>
        <begin position="185"/>
        <end position="205"/>
    </location>
</feature>
<feature type="transmembrane region" description="Helical" evidence="1">
    <location>
        <begin position="227"/>
        <end position="247"/>
    </location>
</feature>
<feature type="transmembrane region" description="Helical" evidence="1">
    <location>
        <begin position="264"/>
        <end position="284"/>
    </location>
</feature>
<feature type="transmembrane region" description="Helical" evidence="1">
    <location>
        <begin position="306"/>
        <end position="326"/>
    </location>
</feature>
<feature type="transmembrane region" description="Helical" evidence="1">
    <location>
        <begin position="337"/>
        <end position="357"/>
    </location>
</feature>
<feature type="mutagenesis site" description="Strongly reduced sporulation efficiency." evidence="2">
    <original>R</original>
    <variation>A</variation>
    <location>
        <position position="48"/>
    </location>
</feature>
<feature type="mutagenesis site" description="No effect on sporulation efficiency." evidence="2">
    <original>S</original>
    <variation>A</variation>
    <location>
        <position position="103"/>
    </location>
</feature>
<feature type="mutagenesis site" description="Severely reduced sporulation efficiency." evidence="2">
    <original>W</original>
    <variation>A</variation>
    <variation>F</variation>
    <location>
        <position position="104"/>
    </location>
</feature>
<feature type="mutagenesis site" description="Severely reduced sporulation efficiency." evidence="2">
    <original>E</original>
    <variation>A</variation>
    <location>
        <position position="116"/>
    </location>
</feature>
<feature type="mutagenesis site" description="Severely reduced sporulation efficiency." evidence="2">
    <original>K</original>
    <variation>N</variation>
    <location>
        <position position="119"/>
    </location>
</feature>
<feature type="mutagenesis site" description="Severely reduced sporulation efficiency." evidence="2">
    <original>D</original>
    <variation>V</variation>
    <location>
        <position position="163"/>
    </location>
</feature>
<feature type="mutagenesis site" description="Severely reduced sporulation efficiency." evidence="2">
    <original>R</original>
    <variation>A</variation>
    <location>
        <position position="212"/>
    </location>
</feature>
<feature type="mutagenesis site" description="Severely reduced sporulation efficiency." evidence="2">
    <original>P</original>
    <variation>A</variation>
    <location>
        <position position="258"/>
    </location>
</feature>
<feature type="mutagenesis site" description="Moderately reduced sporulation efficiency." evidence="2">
    <original>E</original>
    <variation>A</variation>
    <location>
        <position position="259"/>
    </location>
</feature>
<feature type="mutagenesis site" description="Moderately reduced sporulation efficiency." evidence="2">
    <original>T</original>
    <variation>S</variation>
    <location>
        <position position="262"/>
    </location>
</feature>
<feature type="mutagenesis site" description="Severely reduced sporulation efficiency." evidence="2">
    <original>D</original>
    <variation>A</variation>
    <location>
        <position position="263"/>
    </location>
</feature>
<proteinExistence type="evidence at protein level"/>
<sequence length="366" mass="40132">MTTKKTSPDLLLVIITLLLLTIGLIMVYSASAVWADYKFDDSFFFAKRQLLFAGIGVIAMFFIMNVDYWTWRTWSKLLMVICFFLLVLVLIPGVGMVRNGSRSWIGVGAFSIQPSEFMKLAMIAFLAKFLSEKQKNITSFRRGFVPALGIVFSAFLIIMCQPDLGTGTVMVGTCIVMIFVAGARIAHFVFLGLIGLSGFVGLVLSAPYRIKRITSYLNPWEDPLGSGFQIIQSLYAVGPGGLFGMGLGQSRQKFFYLPEPQTDFIFAILSEELGFIGGTLILLLFSVLLWRGIRIALGAPDLYGSFVAVGIISMIAIQVMINIGVVTGLIPVTGITLPFLSYGGSSLTLMLMAVGVLLNVSRYSRY</sequence>